<evidence type="ECO:0000255" key="1">
    <source>
        <dbReference type="HAMAP-Rule" id="MF_01547"/>
    </source>
</evidence>
<evidence type="ECO:0000256" key="2">
    <source>
        <dbReference type="SAM" id="MobiDB-lite"/>
    </source>
</evidence>
<name>RLME_SPHAL</name>
<dbReference type="EC" id="2.1.1.166" evidence="1"/>
<dbReference type="EMBL" id="CP000356">
    <property type="protein sequence ID" value="ABF54459.1"/>
    <property type="molecule type" value="Genomic_DNA"/>
</dbReference>
<dbReference type="RefSeq" id="WP_011543024.1">
    <property type="nucleotide sequence ID" value="NC_008048.1"/>
</dbReference>
<dbReference type="SMR" id="Q1GPG3"/>
<dbReference type="STRING" id="317655.Sala_2754"/>
<dbReference type="KEGG" id="sal:Sala_2754"/>
<dbReference type="eggNOG" id="COG0293">
    <property type="taxonomic scope" value="Bacteria"/>
</dbReference>
<dbReference type="HOGENOM" id="CLU_009422_4_0_5"/>
<dbReference type="OrthoDB" id="9790080at2"/>
<dbReference type="Proteomes" id="UP000006578">
    <property type="component" value="Chromosome"/>
</dbReference>
<dbReference type="GO" id="GO:0005737">
    <property type="term" value="C:cytoplasm"/>
    <property type="evidence" value="ECO:0007669"/>
    <property type="project" value="UniProtKB-SubCell"/>
</dbReference>
<dbReference type="GO" id="GO:0008650">
    <property type="term" value="F:rRNA (uridine-2'-O-)-methyltransferase activity"/>
    <property type="evidence" value="ECO:0007669"/>
    <property type="project" value="UniProtKB-UniRule"/>
</dbReference>
<dbReference type="Gene3D" id="3.40.50.150">
    <property type="entry name" value="Vaccinia Virus protein VP39"/>
    <property type="match status" value="1"/>
</dbReference>
<dbReference type="HAMAP" id="MF_01547">
    <property type="entry name" value="RNA_methyltr_E"/>
    <property type="match status" value="1"/>
</dbReference>
<dbReference type="InterPro" id="IPR050082">
    <property type="entry name" value="RNA_methyltr_RlmE"/>
</dbReference>
<dbReference type="InterPro" id="IPR002877">
    <property type="entry name" value="RNA_MeTrfase_FtsJ_dom"/>
</dbReference>
<dbReference type="InterPro" id="IPR015507">
    <property type="entry name" value="rRNA-MeTfrase_E"/>
</dbReference>
<dbReference type="InterPro" id="IPR029063">
    <property type="entry name" value="SAM-dependent_MTases_sf"/>
</dbReference>
<dbReference type="PANTHER" id="PTHR10920">
    <property type="entry name" value="RIBOSOMAL RNA METHYLTRANSFERASE"/>
    <property type="match status" value="1"/>
</dbReference>
<dbReference type="PANTHER" id="PTHR10920:SF18">
    <property type="entry name" value="RRNA METHYLTRANSFERASE 2, MITOCHONDRIAL"/>
    <property type="match status" value="1"/>
</dbReference>
<dbReference type="Pfam" id="PF01728">
    <property type="entry name" value="FtsJ"/>
    <property type="match status" value="1"/>
</dbReference>
<dbReference type="PIRSF" id="PIRSF005461">
    <property type="entry name" value="23S_rRNA_mtase"/>
    <property type="match status" value="1"/>
</dbReference>
<dbReference type="SUPFAM" id="SSF53335">
    <property type="entry name" value="S-adenosyl-L-methionine-dependent methyltransferases"/>
    <property type="match status" value="1"/>
</dbReference>
<organism>
    <name type="scientific">Sphingopyxis alaskensis (strain DSM 13593 / LMG 18877 / RB2256)</name>
    <name type="common">Sphingomonas alaskensis</name>
    <dbReference type="NCBI Taxonomy" id="317655"/>
    <lineage>
        <taxon>Bacteria</taxon>
        <taxon>Pseudomonadati</taxon>
        <taxon>Pseudomonadota</taxon>
        <taxon>Alphaproteobacteria</taxon>
        <taxon>Sphingomonadales</taxon>
        <taxon>Sphingomonadaceae</taxon>
        <taxon>Sphingopyxis</taxon>
    </lineage>
</organism>
<gene>
    <name evidence="1" type="primary">rlmE</name>
    <name evidence="1" type="synonym">ftsJ</name>
    <name evidence="1" type="synonym">rrmJ</name>
    <name type="ordered locus">Sala_2754</name>
</gene>
<sequence>MSGSGGKGGGRGGLHVRVKTAKRRSVSSTRWLQRQLNDPYVRRAQAEGYRSRAAYKLIELDEKFGLLKKSRAVVDLGIAPGGWSQVVRKANPRARVAGIDLLPCEPIEGVAILEMDFMDDAAPDALIAALGGAPDLVISDMAANTVGHPQTDHLRTIGLAETAADFAVRNLLPGGAFVAKVFAGGADRELLTLLKRHFTTVKHAKPPASRKGSPELYVIAQGFKGRGDAA</sequence>
<reference key="1">
    <citation type="journal article" date="2009" name="Proc. Natl. Acad. Sci. U.S.A.">
        <title>The genomic basis of trophic strategy in marine bacteria.</title>
        <authorList>
            <person name="Lauro F.M."/>
            <person name="McDougald D."/>
            <person name="Thomas T."/>
            <person name="Williams T.J."/>
            <person name="Egan S."/>
            <person name="Rice S."/>
            <person name="DeMaere M.Z."/>
            <person name="Ting L."/>
            <person name="Ertan H."/>
            <person name="Johnson J."/>
            <person name="Ferriera S."/>
            <person name="Lapidus A."/>
            <person name="Anderson I."/>
            <person name="Kyrpides N."/>
            <person name="Munk A.C."/>
            <person name="Detter C."/>
            <person name="Han C.S."/>
            <person name="Brown M.V."/>
            <person name="Robb F.T."/>
            <person name="Kjelleberg S."/>
            <person name="Cavicchioli R."/>
        </authorList>
    </citation>
    <scope>NUCLEOTIDE SEQUENCE [LARGE SCALE GENOMIC DNA]</scope>
    <source>
        <strain>DSM 13593 / LMG 18877 / RB2256</strain>
    </source>
</reference>
<feature type="chain" id="PRO_0000282807" description="Ribosomal RNA large subunit methyltransferase E">
    <location>
        <begin position="1"/>
        <end position="230"/>
    </location>
</feature>
<feature type="region of interest" description="Disordered" evidence="2">
    <location>
        <begin position="1"/>
        <end position="22"/>
    </location>
</feature>
<feature type="compositionally biased region" description="Gly residues" evidence="2">
    <location>
        <begin position="1"/>
        <end position="13"/>
    </location>
</feature>
<feature type="active site" description="Proton acceptor" evidence="1">
    <location>
        <position position="180"/>
    </location>
</feature>
<feature type="binding site" evidence="1">
    <location>
        <position position="81"/>
    </location>
    <ligand>
        <name>S-adenosyl-L-methionine</name>
        <dbReference type="ChEBI" id="CHEBI:59789"/>
    </ligand>
</feature>
<feature type="binding site" evidence="1">
    <location>
        <position position="83"/>
    </location>
    <ligand>
        <name>S-adenosyl-L-methionine</name>
        <dbReference type="ChEBI" id="CHEBI:59789"/>
    </ligand>
</feature>
<feature type="binding site" evidence="1">
    <location>
        <position position="100"/>
    </location>
    <ligand>
        <name>S-adenosyl-L-methionine</name>
        <dbReference type="ChEBI" id="CHEBI:59789"/>
    </ligand>
</feature>
<feature type="binding site" evidence="1">
    <location>
        <position position="116"/>
    </location>
    <ligand>
        <name>S-adenosyl-L-methionine</name>
        <dbReference type="ChEBI" id="CHEBI:59789"/>
    </ligand>
</feature>
<feature type="binding site" evidence="1">
    <location>
        <position position="140"/>
    </location>
    <ligand>
        <name>S-adenosyl-L-methionine</name>
        <dbReference type="ChEBI" id="CHEBI:59789"/>
    </ligand>
</feature>
<comment type="function">
    <text evidence="1">Specifically methylates the uridine in position 2552 of 23S rRNA at the 2'-O position of the ribose in the fully assembled 50S ribosomal subunit.</text>
</comment>
<comment type="catalytic activity">
    <reaction evidence="1">
        <text>uridine(2552) in 23S rRNA + S-adenosyl-L-methionine = 2'-O-methyluridine(2552) in 23S rRNA + S-adenosyl-L-homocysteine + H(+)</text>
        <dbReference type="Rhea" id="RHEA:42720"/>
        <dbReference type="Rhea" id="RHEA-COMP:10202"/>
        <dbReference type="Rhea" id="RHEA-COMP:10203"/>
        <dbReference type="ChEBI" id="CHEBI:15378"/>
        <dbReference type="ChEBI" id="CHEBI:57856"/>
        <dbReference type="ChEBI" id="CHEBI:59789"/>
        <dbReference type="ChEBI" id="CHEBI:65315"/>
        <dbReference type="ChEBI" id="CHEBI:74478"/>
        <dbReference type="EC" id="2.1.1.166"/>
    </reaction>
</comment>
<comment type="subcellular location">
    <subcellularLocation>
        <location evidence="1">Cytoplasm</location>
    </subcellularLocation>
</comment>
<comment type="similarity">
    <text evidence="1">Belongs to the class I-like SAM-binding methyltransferase superfamily. RNA methyltransferase RlmE family.</text>
</comment>
<proteinExistence type="inferred from homology"/>
<protein>
    <recommendedName>
        <fullName evidence="1">Ribosomal RNA large subunit methyltransferase E</fullName>
        <ecNumber evidence="1">2.1.1.166</ecNumber>
    </recommendedName>
    <alternativeName>
        <fullName evidence="1">23S rRNA Um2552 methyltransferase</fullName>
    </alternativeName>
    <alternativeName>
        <fullName evidence="1">rRNA (uridine-2'-O-)-methyltransferase</fullName>
    </alternativeName>
</protein>
<keyword id="KW-0963">Cytoplasm</keyword>
<keyword id="KW-0489">Methyltransferase</keyword>
<keyword id="KW-1185">Reference proteome</keyword>
<keyword id="KW-0698">rRNA processing</keyword>
<keyword id="KW-0949">S-adenosyl-L-methionine</keyword>
<keyword id="KW-0808">Transferase</keyword>
<accession>Q1GPG3</accession>